<keyword id="KW-0229">DNA integration</keyword>
<keyword id="KW-0233">DNA recombination</keyword>
<keyword id="KW-1185">Reference proteome</keyword>
<keyword id="KW-1179">Viral genome integration</keyword>
<keyword id="KW-1160">Virus entry into host cell</keyword>
<dbReference type="EMBL" id="M80548">
    <property type="protein sequence ID" value="AAA73142.1"/>
    <property type="molecule type" value="Genomic_DNA"/>
</dbReference>
<dbReference type="EMBL" id="AY548484">
    <property type="protein sequence ID" value="AAT09675.1"/>
    <property type="molecule type" value="Genomic_DNA"/>
</dbReference>
<dbReference type="PIR" id="A40823">
    <property type="entry name" value="RSXFF3"/>
</dbReference>
<dbReference type="RefSeq" id="YP_031594.1">
    <property type="nucleotide sequence ID" value="NC_005946.1"/>
</dbReference>
<dbReference type="KEGG" id="vg:2947736"/>
<dbReference type="Proteomes" id="UP000008770">
    <property type="component" value="Segment"/>
</dbReference>
<dbReference type="GO" id="GO:0015074">
    <property type="term" value="P:DNA integration"/>
    <property type="evidence" value="ECO:0007669"/>
    <property type="project" value="UniProtKB-KW"/>
</dbReference>
<dbReference type="GO" id="GO:0006310">
    <property type="term" value="P:DNA recombination"/>
    <property type="evidence" value="ECO:0007669"/>
    <property type="project" value="UniProtKB-KW"/>
</dbReference>
<dbReference type="GO" id="GO:0075713">
    <property type="term" value="P:establishment of integrated proviral latency"/>
    <property type="evidence" value="ECO:0007669"/>
    <property type="project" value="UniProtKB-KW"/>
</dbReference>
<dbReference type="GO" id="GO:0046718">
    <property type="term" value="P:symbiont entry into host cell"/>
    <property type="evidence" value="ECO:0007669"/>
    <property type="project" value="UniProtKB-KW"/>
</dbReference>
<dbReference type="GO" id="GO:0044826">
    <property type="term" value="P:viral genome integration into host DNA"/>
    <property type="evidence" value="ECO:0007669"/>
    <property type="project" value="UniProtKB-KW"/>
</dbReference>
<name>VINT_FRG3G</name>
<feature type="chain" id="PRO_0000197528" description="Integrase homolog">
    <location>
        <begin position="1"/>
        <end position="275"/>
    </location>
</feature>
<feature type="region of interest" description="Disordered" evidence="1">
    <location>
        <begin position="88"/>
        <end position="120"/>
    </location>
</feature>
<feature type="compositionally biased region" description="Basic and acidic residues" evidence="1">
    <location>
        <begin position="88"/>
        <end position="111"/>
    </location>
</feature>
<organismHost>
    <name type="scientific">Dryophytes versicolor</name>
    <name type="common">chameleon treefrog</name>
    <dbReference type="NCBI Taxonomy" id="30343"/>
</organismHost>
<organismHost>
    <name type="scientific">Lithobates pipiens</name>
    <name type="common">Northern leopard frog</name>
    <name type="synonym">Rana pipiens</name>
    <dbReference type="NCBI Taxonomy" id="8404"/>
</organismHost>
<organismHost>
    <name type="scientific">Lithobates sylvaticus</name>
    <name type="common">Wood frog</name>
    <name type="synonym">Rana sylvatica</name>
    <dbReference type="NCBI Taxonomy" id="45438"/>
</organismHost>
<organismHost>
    <name type="scientific">Notophthalmus viridescens</name>
    <name type="common">Eastern newt</name>
    <name type="synonym">Triturus viridescens</name>
    <dbReference type="NCBI Taxonomy" id="8316"/>
</organismHost>
<proteinExistence type="inferred from homology"/>
<organism>
    <name type="scientific">Frog virus 3 (isolate Goorha)</name>
    <name type="common">FV-3</name>
    <dbReference type="NCBI Taxonomy" id="654924"/>
    <lineage>
        <taxon>Viruses</taxon>
        <taxon>Varidnaviria</taxon>
        <taxon>Bamfordvirae</taxon>
        <taxon>Nucleocytoviricota</taxon>
        <taxon>Megaviricetes</taxon>
        <taxon>Pimascovirales</taxon>
        <taxon>Iridoviridae</taxon>
        <taxon>Alphairidovirinae</taxon>
        <taxon>Ranavirus</taxon>
        <taxon>Frog virus 3</taxon>
    </lineage>
</organism>
<evidence type="ECO:0000256" key="1">
    <source>
        <dbReference type="SAM" id="MobiDB-lite"/>
    </source>
</evidence>
<evidence type="ECO:0000305" key="2"/>
<protein>
    <recommendedName>
        <fullName>Integrase homolog</fullName>
    </recommendedName>
</protein>
<sequence length="275" mass="29944">MLLHLILILKSFLPKRNLAFRYDIVALSLTRKILLKHQPPENVFAALYIDSLHGGRHQIMPGFCKLSCPTLDVGPGLGRFAASHFSERVSQDRQAQGRERRSVLLPQERRGSSGRQPLYSLLPHRPKREGVIGAALCYTSASHSLSPAALLPPVGRGKDRRCGRQVGAAGLLRHVGRRRQFAQLTRGPLGLPCALLEPLPLDPHLLDKGRDVGVGGCHDHQGQEDGLLLHGGPEPVLGPQGVIGPAYGRPHANVHALRHELQHGPLGDPPRLRSG</sequence>
<accession>P29164</accession>
<accession>Q6GZV9</accession>
<gene>
    <name type="primary">INT</name>
</gene>
<reference key="1">
    <citation type="journal article" date="1992" name="Virology">
        <title>A frog virus 3 gene codes for a protein containing the motif characteristic of the INT family of integrases.</title>
        <authorList>
            <person name="Rohozinski J."/>
            <person name="Goorha R."/>
        </authorList>
    </citation>
    <scope>NUCLEOTIDE SEQUENCE [GENOMIC DNA]</scope>
</reference>
<reference key="2">
    <citation type="journal article" date="2004" name="Virology">
        <title>Comparative genomic analyses of frog virus 3, type species of the genus Ranavirus (family Iridoviridae).</title>
        <authorList>
            <person name="Tan W.G."/>
            <person name="Barkman T.J."/>
            <person name="Gregory Chinchar V."/>
            <person name="Essani K."/>
        </authorList>
    </citation>
    <scope>NUCLEOTIDE SEQUENCE [GENOMIC DNA]</scope>
</reference>
<comment type="function">
    <text>Integrase-recombinase proteins are responsible for catalyzing strand exchange between DNA molecules and play an important role in the DNA replication.</text>
</comment>
<comment type="function">
    <text>May be required for the formation of concatameric complex replicative intermediates and/or their resolution before encapsidation.</text>
</comment>
<comment type="similarity">
    <text evidence="2">Belongs to the 'phage' integrase family.</text>
</comment>